<keyword id="KW-0131">Cell cycle</keyword>
<keyword id="KW-0132">Cell division</keyword>
<keyword id="KW-0143">Chaperone</keyword>
<keyword id="KW-0963">Cytoplasm</keyword>
<keyword id="KW-0413">Isomerase</keyword>
<keyword id="KW-1185">Reference proteome</keyword>
<keyword id="KW-0697">Rotamase</keyword>
<evidence type="ECO:0000255" key="1">
    <source>
        <dbReference type="HAMAP-Rule" id="MF_00303"/>
    </source>
</evidence>
<evidence type="ECO:0000256" key="2">
    <source>
        <dbReference type="SAM" id="MobiDB-lite"/>
    </source>
</evidence>
<reference key="1">
    <citation type="journal article" date="2008" name="J. Biotechnol.">
        <title>Ultrafast pyrosequencing of Corynebacterium kroppenstedtii DSM44385 revealed insights into the physiology of a lipophilic corynebacterium that lacks mycolic acids.</title>
        <authorList>
            <person name="Tauch A."/>
            <person name="Schneider J."/>
            <person name="Szczepanowski R."/>
            <person name="Tilker A."/>
            <person name="Viehoever P."/>
            <person name="Gartemann K.-H."/>
            <person name="Arnold W."/>
            <person name="Blom J."/>
            <person name="Brinkrolf K."/>
            <person name="Brune I."/>
            <person name="Goetker S."/>
            <person name="Weisshaar B."/>
            <person name="Goesmann A."/>
            <person name="Droege M."/>
            <person name="Puehler A."/>
        </authorList>
    </citation>
    <scope>NUCLEOTIDE SEQUENCE [LARGE SCALE GENOMIC DNA]</scope>
    <source>
        <strain>DSM 44385 / JCM 11950 / CIP 105744 / CCUG 35717</strain>
    </source>
</reference>
<protein>
    <recommendedName>
        <fullName evidence="1">Trigger factor</fullName>
        <shortName evidence="1">TF</shortName>
        <ecNumber evidence="1">5.2.1.8</ecNumber>
    </recommendedName>
    <alternativeName>
        <fullName evidence="1">PPIase</fullName>
    </alternativeName>
</protein>
<feature type="chain" id="PRO_1000204981" description="Trigger factor">
    <location>
        <begin position="1"/>
        <end position="495"/>
    </location>
</feature>
<feature type="domain" description="PPIase FKBP-type" evidence="1">
    <location>
        <begin position="162"/>
        <end position="243"/>
    </location>
</feature>
<feature type="region of interest" description="Disordered" evidence="2">
    <location>
        <begin position="425"/>
        <end position="495"/>
    </location>
</feature>
<feature type="compositionally biased region" description="Basic and acidic residues" evidence="2">
    <location>
        <begin position="425"/>
        <end position="437"/>
    </location>
</feature>
<feature type="compositionally biased region" description="Low complexity" evidence="2">
    <location>
        <begin position="450"/>
        <end position="461"/>
    </location>
</feature>
<feature type="compositionally biased region" description="Acidic residues" evidence="2">
    <location>
        <begin position="486"/>
        <end position="495"/>
    </location>
</feature>
<dbReference type="EC" id="5.2.1.8" evidence="1"/>
<dbReference type="EMBL" id="CP001620">
    <property type="protein sequence ID" value="ACR18114.1"/>
    <property type="molecule type" value="Genomic_DNA"/>
</dbReference>
<dbReference type="RefSeq" id="WP_012732001.1">
    <property type="nucleotide sequence ID" value="NC_012704.1"/>
</dbReference>
<dbReference type="SMR" id="C4LJV9"/>
<dbReference type="STRING" id="645127.ckrop_1373"/>
<dbReference type="KEGG" id="ckp:ckrop_1373"/>
<dbReference type="eggNOG" id="COG0544">
    <property type="taxonomic scope" value="Bacteria"/>
</dbReference>
<dbReference type="HOGENOM" id="CLU_033058_3_0_11"/>
<dbReference type="OrthoDB" id="9767721at2"/>
<dbReference type="Proteomes" id="UP000001473">
    <property type="component" value="Chromosome"/>
</dbReference>
<dbReference type="GO" id="GO:0005737">
    <property type="term" value="C:cytoplasm"/>
    <property type="evidence" value="ECO:0007669"/>
    <property type="project" value="UniProtKB-SubCell"/>
</dbReference>
<dbReference type="GO" id="GO:0003755">
    <property type="term" value="F:peptidyl-prolyl cis-trans isomerase activity"/>
    <property type="evidence" value="ECO:0007669"/>
    <property type="project" value="UniProtKB-UniRule"/>
</dbReference>
<dbReference type="GO" id="GO:0044183">
    <property type="term" value="F:protein folding chaperone"/>
    <property type="evidence" value="ECO:0007669"/>
    <property type="project" value="TreeGrafter"/>
</dbReference>
<dbReference type="GO" id="GO:0043022">
    <property type="term" value="F:ribosome binding"/>
    <property type="evidence" value="ECO:0007669"/>
    <property type="project" value="TreeGrafter"/>
</dbReference>
<dbReference type="GO" id="GO:0051083">
    <property type="term" value="P:'de novo' cotranslational protein folding"/>
    <property type="evidence" value="ECO:0007669"/>
    <property type="project" value="TreeGrafter"/>
</dbReference>
<dbReference type="GO" id="GO:0051301">
    <property type="term" value="P:cell division"/>
    <property type="evidence" value="ECO:0007669"/>
    <property type="project" value="UniProtKB-KW"/>
</dbReference>
<dbReference type="GO" id="GO:0061077">
    <property type="term" value="P:chaperone-mediated protein folding"/>
    <property type="evidence" value="ECO:0007669"/>
    <property type="project" value="TreeGrafter"/>
</dbReference>
<dbReference type="GO" id="GO:0015031">
    <property type="term" value="P:protein transport"/>
    <property type="evidence" value="ECO:0007669"/>
    <property type="project" value="UniProtKB-UniRule"/>
</dbReference>
<dbReference type="GO" id="GO:0043335">
    <property type="term" value="P:protein unfolding"/>
    <property type="evidence" value="ECO:0007669"/>
    <property type="project" value="TreeGrafter"/>
</dbReference>
<dbReference type="Gene3D" id="3.10.50.40">
    <property type="match status" value="1"/>
</dbReference>
<dbReference type="Gene3D" id="3.30.70.1050">
    <property type="entry name" value="Trigger factor ribosome-binding domain"/>
    <property type="match status" value="1"/>
</dbReference>
<dbReference type="Gene3D" id="1.10.3120.10">
    <property type="entry name" value="Trigger factor, C-terminal domain"/>
    <property type="match status" value="1"/>
</dbReference>
<dbReference type="HAMAP" id="MF_00303">
    <property type="entry name" value="Trigger_factor_Tig"/>
    <property type="match status" value="1"/>
</dbReference>
<dbReference type="InterPro" id="IPR046357">
    <property type="entry name" value="PPIase_dom_sf"/>
</dbReference>
<dbReference type="InterPro" id="IPR001179">
    <property type="entry name" value="PPIase_FKBP_dom"/>
</dbReference>
<dbReference type="InterPro" id="IPR005215">
    <property type="entry name" value="Trig_fac"/>
</dbReference>
<dbReference type="InterPro" id="IPR008880">
    <property type="entry name" value="Trigger_fac_C"/>
</dbReference>
<dbReference type="InterPro" id="IPR037041">
    <property type="entry name" value="Trigger_fac_C_sf"/>
</dbReference>
<dbReference type="InterPro" id="IPR008881">
    <property type="entry name" value="Trigger_fac_ribosome-bd_bac"/>
</dbReference>
<dbReference type="InterPro" id="IPR036611">
    <property type="entry name" value="Trigger_fac_ribosome-bd_sf"/>
</dbReference>
<dbReference type="InterPro" id="IPR027304">
    <property type="entry name" value="Trigger_fact/SurA_dom_sf"/>
</dbReference>
<dbReference type="NCBIfam" id="TIGR00115">
    <property type="entry name" value="tig"/>
    <property type="match status" value="1"/>
</dbReference>
<dbReference type="PANTHER" id="PTHR30560">
    <property type="entry name" value="TRIGGER FACTOR CHAPERONE AND PEPTIDYL-PROLYL CIS/TRANS ISOMERASE"/>
    <property type="match status" value="1"/>
</dbReference>
<dbReference type="PANTHER" id="PTHR30560:SF3">
    <property type="entry name" value="TRIGGER FACTOR-LIKE PROTEIN TIG, CHLOROPLASTIC"/>
    <property type="match status" value="1"/>
</dbReference>
<dbReference type="Pfam" id="PF00254">
    <property type="entry name" value="FKBP_C"/>
    <property type="match status" value="1"/>
</dbReference>
<dbReference type="Pfam" id="PF05698">
    <property type="entry name" value="Trigger_C"/>
    <property type="match status" value="1"/>
</dbReference>
<dbReference type="Pfam" id="PF05697">
    <property type="entry name" value="Trigger_N"/>
    <property type="match status" value="1"/>
</dbReference>
<dbReference type="PIRSF" id="PIRSF003095">
    <property type="entry name" value="Trigger_factor"/>
    <property type="match status" value="1"/>
</dbReference>
<dbReference type="SUPFAM" id="SSF54534">
    <property type="entry name" value="FKBP-like"/>
    <property type="match status" value="1"/>
</dbReference>
<dbReference type="SUPFAM" id="SSF109998">
    <property type="entry name" value="Triger factor/SurA peptide-binding domain-like"/>
    <property type="match status" value="1"/>
</dbReference>
<dbReference type="SUPFAM" id="SSF102735">
    <property type="entry name" value="Trigger factor ribosome-binding domain"/>
    <property type="match status" value="1"/>
</dbReference>
<dbReference type="PROSITE" id="PS50059">
    <property type="entry name" value="FKBP_PPIASE"/>
    <property type="match status" value="1"/>
</dbReference>
<accession>C4LJV9</accession>
<sequence>MKSSVEQQSATRVKLTVEVPFDELQPEIDQAYRSLAQQVTLPGFRKGKVPPRVLEARLGRGAILDQAINNMLPSRYSQAVEEHDLKVLTQPTIDITRLEDNELVEFTAEADVRPEIDLPDFSTIEVEVDPLVADDAAVDAELDNLRARFGTLKAVERPVQKDDFVSIDLSATVGGEPVDEATTEGLSHQVGNGELIEGLDDALEGMKVDESKTFKSNLVAGDHEGEEAEVTVTVKSLKERELPEADDDFAQLASEFDTIGELRESLAKQVEENKKAEQASSIRDKVLEKALEKTDFELPEAVVEEQVKGQLNQLLQQFNGDEKAFDQLLAAQGSSREQFDRDTRSSAEEAVRTQLFLDTLADELQPEVSQQEFTEHIMFTAQRYGMEPQQFMQAIQASDQIGALYADVRRGKALAESICTVSVKDTDGNEIDPKEYFGEEENTDETSTGSADAEASENSEATPSGTETEESAEFDQAAEAPVATPTDDDSENAEK</sequence>
<comment type="function">
    <text evidence="1">Involved in protein export. Acts as a chaperone by maintaining the newly synthesized protein in an open conformation. Functions as a peptidyl-prolyl cis-trans isomerase.</text>
</comment>
<comment type="catalytic activity">
    <reaction evidence="1">
        <text>[protein]-peptidylproline (omega=180) = [protein]-peptidylproline (omega=0)</text>
        <dbReference type="Rhea" id="RHEA:16237"/>
        <dbReference type="Rhea" id="RHEA-COMP:10747"/>
        <dbReference type="Rhea" id="RHEA-COMP:10748"/>
        <dbReference type="ChEBI" id="CHEBI:83833"/>
        <dbReference type="ChEBI" id="CHEBI:83834"/>
        <dbReference type="EC" id="5.2.1.8"/>
    </reaction>
</comment>
<comment type="subcellular location">
    <subcellularLocation>
        <location>Cytoplasm</location>
    </subcellularLocation>
    <text evidence="1">About half TF is bound to the ribosome near the polypeptide exit tunnel while the other half is free in the cytoplasm.</text>
</comment>
<comment type="domain">
    <text evidence="1">Consists of 3 domains; the N-terminus binds the ribosome, the middle domain has PPIase activity, while the C-terminus has intrinsic chaperone activity on its own.</text>
</comment>
<comment type="similarity">
    <text evidence="1">Belongs to the FKBP-type PPIase family. Tig subfamily.</text>
</comment>
<organism>
    <name type="scientific">Corynebacterium kroppenstedtii (strain DSM 44385 / JCM 11950 / CIP 105744 / CCUG 35717)</name>
    <dbReference type="NCBI Taxonomy" id="645127"/>
    <lineage>
        <taxon>Bacteria</taxon>
        <taxon>Bacillati</taxon>
        <taxon>Actinomycetota</taxon>
        <taxon>Actinomycetes</taxon>
        <taxon>Mycobacteriales</taxon>
        <taxon>Corynebacteriaceae</taxon>
        <taxon>Corynebacterium</taxon>
    </lineage>
</organism>
<gene>
    <name evidence="1" type="primary">tig</name>
    <name type="ordered locus">ckrop_1373</name>
</gene>
<proteinExistence type="inferred from homology"/>
<name>TIG_CORK4</name>